<dbReference type="EC" id="1.1.1.18" evidence="1"/>
<dbReference type="EC" id="1.1.1.369" evidence="1"/>
<dbReference type="EMBL" id="EF382358">
    <property type="protein sequence ID" value="ABP57766.1"/>
    <property type="molecule type" value="Genomic_DNA"/>
</dbReference>
<dbReference type="SMR" id="A5YBJ7"/>
<dbReference type="STRING" id="1582.AAW28_06895"/>
<dbReference type="eggNOG" id="COG0673">
    <property type="taxonomic scope" value="Bacteria"/>
</dbReference>
<dbReference type="OMA" id="VNCKYGY"/>
<dbReference type="UniPathway" id="UPA00076">
    <property type="reaction ID" value="UER00143"/>
</dbReference>
<dbReference type="GO" id="GO:0050112">
    <property type="term" value="F:inositol 2-dehydrogenase (NAD+) activity"/>
    <property type="evidence" value="ECO:0007669"/>
    <property type="project" value="UniProtKB-UniRule"/>
</dbReference>
<dbReference type="GO" id="GO:0000166">
    <property type="term" value="F:nucleotide binding"/>
    <property type="evidence" value="ECO:0007669"/>
    <property type="project" value="InterPro"/>
</dbReference>
<dbReference type="GO" id="GO:0019310">
    <property type="term" value="P:inositol catabolic process"/>
    <property type="evidence" value="ECO:0007669"/>
    <property type="project" value="UniProtKB-UniRule"/>
</dbReference>
<dbReference type="Gene3D" id="3.30.360.10">
    <property type="entry name" value="Dihydrodipicolinate Reductase, domain 2"/>
    <property type="match status" value="1"/>
</dbReference>
<dbReference type="Gene3D" id="3.40.50.720">
    <property type="entry name" value="NAD(P)-binding Rossmann-like Domain"/>
    <property type="match status" value="1"/>
</dbReference>
<dbReference type="HAMAP" id="MF_01671">
    <property type="entry name" value="IolG"/>
    <property type="match status" value="1"/>
</dbReference>
<dbReference type="InterPro" id="IPR050424">
    <property type="entry name" value="Gfo-Idh-MocA_inositol_DH"/>
</dbReference>
<dbReference type="InterPro" id="IPR004104">
    <property type="entry name" value="Gfo/Idh/MocA-like_OxRdtase_C"/>
</dbReference>
<dbReference type="InterPro" id="IPR000683">
    <property type="entry name" value="Gfo/Idh/MocA-like_OxRdtase_N"/>
</dbReference>
<dbReference type="InterPro" id="IPR023794">
    <property type="entry name" value="MI/DCI_dehydrogenase"/>
</dbReference>
<dbReference type="InterPro" id="IPR036291">
    <property type="entry name" value="NAD(P)-bd_dom_sf"/>
</dbReference>
<dbReference type="PANTHER" id="PTHR43593">
    <property type="match status" value="1"/>
</dbReference>
<dbReference type="PANTHER" id="PTHR43593:SF1">
    <property type="entry name" value="INOSITOL 2-DEHYDROGENASE"/>
    <property type="match status" value="1"/>
</dbReference>
<dbReference type="Pfam" id="PF01408">
    <property type="entry name" value="GFO_IDH_MocA"/>
    <property type="match status" value="1"/>
</dbReference>
<dbReference type="Pfam" id="PF02894">
    <property type="entry name" value="GFO_IDH_MocA_C"/>
    <property type="match status" value="1"/>
</dbReference>
<dbReference type="SUPFAM" id="SSF55347">
    <property type="entry name" value="Glyceraldehyde-3-phosphate dehydrogenase-like, C-terminal domain"/>
    <property type="match status" value="1"/>
</dbReference>
<dbReference type="SUPFAM" id="SSF51735">
    <property type="entry name" value="NAD(P)-binding Rossmann-fold domains"/>
    <property type="match status" value="1"/>
</dbReference>
<sequence length="346" mass="37964">MVVKVGVIGTGAMGRAHIDRLTNVLTGAEVVAVTDIDHEAAEAAVRDFHLNAKVYPDDTSLLQDPDIDAVFVVSFGGAHEATVLKALDTDKFIFTEKPLATTLEGAKRIVDKELTKSKKVIQVGFMRRYDQGIRALKEKLDTGIIGAPLVVRASHINPNVASNYSNEMAITDTLIHEIDEMHWLLDDEYTSIQITYPRQSAEVRNEGLHDPQLATLTTKKGTVIQVLVHVTAQYGYEVKLEVIGETGELQLPNYGLGPILRSNANQQTAVEMSWINRFIQAYNTEVQEFIDQVAKSEPPVGPSAWDGYIAAITAAAANRSQKDQETVLINVAGTPTFYQNKNAIHA</sequence>
<comment type="function">
    <text evidence="1">Involved in the oxidation of myo-inositol (MI) and D-chiro-inositol (DCI) to 2-keto-myo-inositol (2KMI or 2-inosose) and 1-keto-D-chiro-inositol (1KDCI), respectively.</text>
</comment>
<comment type="catalytic activity">
    <reaction evidence="1">
        <text>myo-inositol + NAD(+) = scyllo-inosose + NADH + H(+)</text>
        <dbReference type="Rhea" id="RHEA:16949"/>
        <dbReference type="ChEBI" id="CHEBI:15378"/>
        <dbReference type="ChEBI" id="CHEBI:17268"/>
        <dbReference type="ChEBI" id="CHEBI:17811"/>
        <dbReference type="ChEBI" id="CHEBI:57540"/>
        <dbReference type="ChEBI" id="CHEBI:57945"/>
        <dbReference type="EC" id="1.1.1.18"/>
    </reaction>
</comment>
<comment type="catalytic activity">
    <reaction evidence="1">
        <text>1D-chiro-inositol + NAD(+) = scyllo-inosine + NADH + H(+)</text>
        <dbReference type="Rhea" id="RHEA:25832"/>
        <dbReference type="ChEBI" id="CHEBI:15378"/>
        <dbReference type="ChEBI" id="CHEBI:27372"/>
        <dbReference type="ChEBI" id="CHEBI:50920"/>
        <dbReference type="ChEBI" id="CHEBI:57540"/>
        <dbReference type="ChEBI" id="CHEBI:57945"/>
        <dbReference type="EC" id="1.1.1.369"/>
    </reaction>
</comment>
<comment type="pathway">
    <text evidence="1">Polyol metabolism; myo-inositol degradation into acetyl-CoA; acetyl-CoA from myo-inositol: step 1/7.</text>
</comment>
<comment type="subunit">
    <text evidence="1">Homotetramer.</text>
</comment>
<comment type="similarity">
    <text evidence="1">Belongs to the Gfo/Idh/MocA family.</text>
</comment>
<reference key="1">
    <citation type="journal article" date="2007" name="Appl. Environ. Microbiol.">
        <title>Identification of a gene cluster allowing Lactobacillus casei BL23 the utilization of myo-inositol.</title>
        <authorList>
            <person name="Yebra M.J."/>
            <person name="Zuniga M."/>
            <person name="Beaufils S."/>
            <person name="Perez-Martinez G."/>
            <person name="Deutscher J."/>
            <person name="Monedero V."/>
        </authorList>
    </citation>
    <scope>NUCLEOTIDE SEQUENCE [GENOMIC DNA]</scope>
    <source>
        <strain>BL23</strain>
    </source>
</reference>
<organism>
    <name type="scientific">Lacticaseibacillus casei</name>
    <name type="common">Lactobacillus casei</name>
    <dbReference type="NCBI Taxonomy" id="1582"/>
    <lineage>
        <taxon>Bacteria</taxon>
        <taxon>Bacillati</taxon>
        <taxon>Bacillota</taxon>
        <taxon>Bacilli</taxon>
        <taxon>Lactobacillales</taxon>
        <taxon>Lactobacillaceae</taxon>
        <taxon>Lacticaseibacillus</taxon>
    </lineage>
</organism>
<name>IOLG_LACCA</name>
<proteinExistence type="inferred from homology"/>
<protein>
    <recommendedName>
        <fullName evidence="1">Inositol 2-dehydrogenase/D-chiro-inositol 3-dehydrogenase</fullName>
        <ecNumber evidence="1">1.1.1.18</ecNumber>
        <ecNumber evidence="1">1.1.1.369</ecNumber>
    </recommendedName>
    <alternativeName>
        <fullName evidence="1">Myo-inositol 2-dehydrogenase/D-chiro-inositol 3-dehydrogenase</fullName>
        <shortName evidence="1">MI 2-dehydrogenase/DCI 3-dehydrogenase</shortName>
    </alternativeName>
</protein>
<accession>A5YBJ7</accession>
<gene>
    <name evidence="1" type="primary">iolG</name>
</gene>
<evidence type="ECO:0000255" key="1">
    <source>
        <dbReference type="HAMAP-Rule" id="MF_01671"/>
    </source>
</evidence>
<feature type="chain" id="PRO_0000352572" description="Inositol 2-dehydrogenase/D-chiro-inositol 3-dehydrogenase">
    <location>
        <begin position="1"/>
        <end position="346"/>
    </location>
</feature>
<keyword id="KW-0520">NAD</keyword>
<keyword id="KW-0560">Oxidoreductase</keyword>